<organism>
    <name type="scientific">Homo sapiens</name>
    <name type="common">Human</name>
    <dbReference type="NCBI Taxonomy" id="9606"/>
    <lineage>
        <taxon>Eukaryota</taxon>
        <taxon>Metazoa</taxon>
        <taxon>Chordata</taxon>
        <taxon>Craniata</taxon>
        <taxon>Vertebrata</taxon>
        <taxon>Euteleostomi</taxon>
        <taxon>Mammalia</taxon>
        <taxon>Eutheria</taxon>
        <taxon>Euarchontoglires</taxon>
        <taxon>Primates</taxon>
        <taxon>Haplorrhini</taxon>
        <taxon>Catarrhini</taxon>
        <taxon>Hominidae</taxon>
        <taxon>Homo</taxon>
    </lineage>
</organism>
<dbReference type="EC" id="2.5.1.10" evidence="3"/>
<dbReference type="EC" id="2.5.1.1" evidence="3"/>
<dbReference type="EMBL" id="J05262">
    <property type="protein sequence ID" value="AAA52423.1"/>
    <property type="molecule type" value="mRNA"/>
</dbReference>
<dbReference type="EMBL" id="D14697">
    <property type="protein sequence ID" value="BAA03523.2"/>
    <property type="status" value="ALT_INIT"/>
    <property type="molecule type" value="mRNA"/>
</dbReference>
<dbReference type="EMBL" id="AK291084">
    <property type="protein sequence ID" value="BAF83773.1"/>
    <property type="molecule type" value="mRNA"/>
</dbReference>
<dbReference type="EMBL" id="AL139410">
    <property type="status" value="NOT_ANNOTATED_CDS"/>
    <property type="molecule type" value="Genomic_DNA"/>
</dbReference>
<dbReference type="EMBL" id="CH471121">
    <property type="protein sequence ID" value="EAW53076.1"/>
    <property type="molecule type" value="Genomic_DNA"/>
</dbReference>
<dbReference type="EMBL" id="CH471121">
    <property type="protein sequence ID" value="EAW53077.1"/>
    <property type="molecule type" value="Genomic_DNA"/>
</dbReference>
<dbReference type="EMBL" id="CH471121">
    <property type="protein sequence ID" value="EAW53078.1"/>
    <property type="molecule type" value="Genomic_DNA"/>
</dbReference>
<dbReference type="EMBL" id="BC010004">
    <property type="protein sequence ID" value="AAH10004.1"/>
    <property type="molecule type" value="mRNA"/>
</dbReference>
<dbReference type="EMBL" id="BQ062616">
    <property type="status" value="NOT_ANNOTATED_CDS"/>
    <property type="molecule type" value="mRNA"/>
</dbReference>
<dbReference type="EMBL" id="M29863">
    <property type="protein sequence ID" value="AAA35820.1"/>
    <property type="molecule type" value="mRNA"/>
</dbReference>
<dbReference type="CCDS" id="CCDS1110.1">
    <molecule id="P14324-1"/>
</dbReference>
<dbReference type="CCDS" id="CCDS44241.1">
    <molecule id="P14324-2"/>
</dbReference>
<dbReference type="PIR" id="A35726">
    <property type="entry name" value="A35726"/>
</dbReference>
<dbReference type="RefSeq" id="NP_001129293.1">
    <molecule id="P14324-1"/>
    <property type="nucleotide sequence ID" value="NM_001135821.2"/>
</dbReference>
<dbReference type="RefSeq" id="NP_001129294.1">
    <molecule id="P14324-2"/>
    <property type="nucleotide sequence ID" value="NM_001135822.2"/>
</dbReference>
<dbReference type="RefSeq" id="NP_001229753.1">
    <molecule id="P14324-2"/>
    <property type="nucleotide sequence ID" value="NM_001242824.2"/>
</dbReference>
<dbReference type="RefSeq" id="NP_001229754.1">
    <property type="nucleotide sequence ID" value="NM_001242825.1"/>
</dbReference>
<dbReference type="RefSeq" id="NP_001365353.1">
    <molecule id="P14324-2"/>
    <property type="nucleotide sequence ID" value="NM_001378424.1"/>
</dbReference>
<dbReference type="RefSeq" id="NP_001365354.1">
    <molecule id="P14324-2"/>
    <property type="nucleotide sequence ID" value="NM_001378425.1"/>
</dbReference>
<dbReference type="RefSeq" id="NP_001995.1">
    <molecule id="P14324-1"/>
    <property type="nucleotide sequence ID" value="NM_002004.4"/>
</dbReference>
<dbReference type="RefSeq" id="XP_005245019.1">
    <property type="nucleotide sequence ID" value="XM_005244962.1"/>
</dbReference>
<dbReference type="RefSeq" id="XP_005245020.1">
    <property type="nucleotide sequence ID" value="XM_005244963.1"/>
</dbReference>
<dbReference type="PDB" id="1YQ7">
    <property type="method" value="X-ray"/>
    <property type="resolution" value="2.20 A"/>
    <property type="chains" value="A=67-419"/>
</dbReference>
<dbReference type="PDB" id="1YV5">
    <property type="method" value="X-ray"/>
    <property type="resolution" value="2.00 A"/>
    <property type="chains" value="A=67-419"/>
</dbReference>
<dbReference type="PDB" id="1ZW5">
    <property type="method" value="X-ray"/>
    <property type="resolution" value="2.30 A"/>
    <property type="chains" value="A=67-419"/>
</dbReference>
<dbReference type="PDB" id="2F7M">
    <property type="method" value="X-ray"/>
    <property type="resolution" value="2.30 A"/>
    <property type="chains" value="F=72-419"/>
</dbReference>
<dbReference type="PDB" id="2F89">
    <property type="method" value="X-ray"/>
    <property type="resolution" value="2.60 A"/>
    <property type="chains" value="F=72-419"/>
</dbReference>
<dbReference type="PDB" id="2F8C">
    <property type="method" value="X-ray"/>
    <property type="resolution" value="2.20 A"/>
    <property type="chains" value="F=72-419"/>
</dbReference>
<dbReference type="PDB" id="2F8Z">
    <property type="method" value="X-ray"/>
    <property type="resolution" value="2.60 A"/>
    <property type="chains" value="F=72-419"/>
</dbReference>
<dbReference type="PDB" id="2F92">
    <property type="method" value="X-ray"/>
    <property type="resolution" value="2.15 A"/>
    <property type="chains" value="F=72-419"/>
</dbReference>
<dbReference type="PDB" id="2F94">
    <property type="method" value="X-ray"/>
    <property type="resolution" value="1.94 A"/>
    <property type="chains" value="F=72-419"/>
</dbReference>
<dbReference type="PDB" id="2F9K">
    <property type="method" value="X-ray"/>
    <property type="resolution" value="2.06 A"/>
    <property type="chains" value="F=72-419"/>
</dbReference>
<dbReference type="PDB" id="2OPM">
    <property type="method" value="X-ray"/>
    <property type="resolution" value="2.40 A"/>
    <property type="chains" value="A=67-419"/>
</dbReference>
<dbReference type="PDB" id="2OPN">
    <property type="method" value="X-ray"/>
    <property type="resolution" value="2.70 A"/>
    <property type="chains" value="A=67-419"/>
</dbReference>
<dbReference type="PDB" id="2QIS">
    <property type="method" value="X-ray"/>
    <property type="resolution" value="1.80 A"/>
    <property type="chains" value="A=67-419"/>
</dbReference>
<dbReference type="PDB" id="2RAH">
    <property type="method" value="X-ray"/>
    <property type="resolution" value="2.00 A"/>
    <property type="chains" value="A=67-419"/>
</dbReference>
<dbReference type="PDB" id="2VF6">
    <property type="method" value="X-ray"/>
    <property type="resolution" value="2.10 A"/>
    <property type="chains" value="A=67-419"/>
</dbReference>
<dbReference type="PDB" id="3B7L">
    <property type="method" value="X-ray"/>
    <property type="resolution" value="1.95 A"/>
    <property type="chains" value="A=67-419"/>
</dbReference>
<dbReference type="PDB" id="3CP6">
    <property type="method" value="X-ray"/>
    <property type="resolution" value="1.95 A"/>
    <property type="chains" value="A=67-419"/>
</dbReference>
<dbReference type="PDB" id="3N1V">
    <property type="method" value="X-ray"/>
    <property type="resolution" value="2.18 A"/>
    <property type="chains" value="F=72-419"/>
</dbReference>
<dbReference type="PDB" id="3N1W">
    <property type="method" value="X-ray"/>
    <property type="resolution" value="2.56 A"/>
    <property type="chains" value="F=72-419"/>
</dbReference>
<dbReference type="PDB" id="3N3L">
    <property type="method" value="X-ray"/>
    <property type="resolution" value="2.74 A"/>
    <property type="chains" value="F=72-419"/>
</dbReference>
<dbReference type="PDB" id="3N45">
    <property type="method" value="X-ray"/>
    <property type="resolution" value="1.88 A"/>
    <property type="chains" value="F=72-419"/>
</dbReference>
<dbReference type="PDB" id="3N46">
    <property type="method" value="X-ray"/>
    <property type="resolution" value="2.35 A"/>
    <property type="chains" value="F=72-419"/>
</dbReference>
<dbReference type="PDB" id="3N49">
    <property type="method" value="X-ray"/>
    <property type="resolution" value="2.50 A"/>
    <property type="chains" value="F=72-419"/>
</dbReference>
<dbReference type="PDB" id="3N5H">
    <property type="method" value="X-ray"/>
    <property type="resolution" value="2.20 A"/>
    <property type="chains" value="F=72-419"/>
</dbReference>
<dbReference type="PDB" id="3N5J">
    <property type="method" value="X-ray"/>
    <property type="resolution" value="2.35 A"/>
    <property type="chains" value="F=72-419"/>
</dbReference>
<dbReference type="PDB" id="3N6K">
    <property type="method" value="X-ray"/>
    <property type="resolution" value="2.25 A"/>
    <property type="chains" value="F=72-419"/>
</dbReference>
<dbReference type="PDB" id="3RYE">
    <property type="method" value="X-ray"/>
    <property type="resolution" value="2.10 A"/>
    <property type="chains" value="A=71-419"/>
</dbReference>
<dbReference type="PDB" id="3S4J">
    <property type="method" value="X-ray"/>
    <property type="resolution" value="1.95 A"/>
    <property type="chains" value="A=71-419"/>
</dbReference>
<dbReference type="PDB" id="4DEM">
    <property type="method" value="X-ray"/>
    <property type="resolution" value="1.85 A"/>
    <property type="chains" value="F=67-419"/>
</dbReference>
<dbReference type="PDB" id="4GA3">
    <property type="method" value="X-ray"/>
    <property type="resolution" value="2.39 A"/>
    <property type="chains" value="A=72-419"/>
</dbReference>
<dbReference type="PDB" id="4H5C">
    <property type="method" value="X-ray"/>
    <property type="resolution" value="2.02 A"/>
    <property type="chains" value="F=67-419"/>
</dbReference>
<dbReference type="PDB" id="4H5D">
    <property type="method" value="X-ray"/>
    <property type="resolution" value="2.02 A"/>
    <property type="chains" value="F=67-419"/>
</dbReference>
<dbReference type="PDB" id="4H5E">
    <property type="method" value="X-ray"/>
    <property type="resolution" value="2.04 A"/>
    <property type="chains" value="F=67-419"/>
</dbReference>
<dbReference type="PDB" id="4JVJ">
    <property type="method" value="X-ray"/>
    <property type="resolution" value="2.80 A"/>
    <property type="chains" value="F=67-419"/>
</dbReference>
<dbReference type="PDB" id="4KFA">
    <property type="method" value="X-ray"/>
    <property type="resolution" value="1.98 A"/>
    <property type="chains" value="A=67-419"/>
</dbReference>
<dbReference type="PDB" id="4KPD">
    <property type="method" value="X-ray"/>
    <property type="resolution" value="1.96 A"/>
    <property type="chains" value="A=67-419"/>
</dbReference>
<dbReference type="PDB" id="4KPJ">
    <property type="method" value="X-ray"/>
    <property type="resolution" value="1.95 A"/>
    <property type="chains" value="A=67-419"/>
</dbReference>
<dbReference type="PDB" id="4KQ5">
    <property type="method" value="X-ray"/>
    <property type="resolution" value="2.40 A"/>
    <property type="chains" value="A=67-419"/>
</dbReference>
<dbReference type="PDB" id="4KQS">
    <property type="method" value="X-ray"/>
    <property type="resolution" value="1.97 A"/>
    <property type="chains" value="A=67-419"/>
</dbReference>
<dbReference type="PDB" id="4KQU">
    <property type="method" value="X-ray"/>
    <property type="resolution" value="2.07 A"/>
    <property type="chains" value="A=67-419"/>
</dbReference>
<dbReference type="PDB" id="4L2X">
    <property type="method" value="X-ray"/>
    <property type="resolution" value="2.55 A"/>
    <property type="chains" value="F=67-419"/>
</dbReference>
<dbReference type="PDB" id="4LFV">
    <property type="method" value="X-ray"/>
    <property type="resolution" value="2.00 A"/>
    <property type="chains" value="F=67-419"/>
</dbReference>
<dbReference type="PDB" id="4LPG">
    <property type="method" value="X-ray"/>
    <property type="resolution" value="2.35 A"/>
    <property type="chains" value="F=67-419"/>
</dbReference>
<dbReference type="PDB" id="4LPH">
    <property type="method" value="X-ray"/>
    <property type="resolution" value="2.30 A"/>
    <property type="chains" value="F=67-419"/>
</dbReference>
<dbReference type="PDB" id="4N1Z">
    <property type="method" value="X-ray"/>
    <property type="resolution" value="2.35 A"/>
    <property type="chains" value="F=72-419"/>
</dbReference>
<dbReference type="PDB" id="4N9U">
    <property type="method" value="X-ray"/>
    <property type="resolution" value="2.11 A"/>
    <property type="chains" value="A=67-419"/>
</dbReference>
<dbReference type="PDB" id="4NFI">
    <property type="method" value="X-ray"/>
    <property type="resolution" value="1.85 A"/>
    <property type="chains" value="F=67-419"/>
</dbReference>
<dbReference type="PDB" id="4NFJ">
    <property type="method" value="X-ray"/>
    <property type="resolution" value="2.05 A"/>
    <property type="chains" value="F=67-419"/>
</dbReference>
<dbReference type="PDB" id="4NFK">
    <property type="method" value="X-ray"/>
    <property type="resolution" value="1.85 A"/>
    <property type="chains" value="F=67-419"/>
</dbReference>
<dbReference type="PDB" id="4NG6">
    <property type="method" value="X-ray"/>
    <property type="resolution" value="2.35 A"/>
    <property type="chains" value="A=67-419"/>
</dbReference>
<dbReference type="PDB" id="4NKE">
    <property type="method" value="X-ray"/>
    <property type="resolution" value="1.46 A"/>
    <property type="chains" value="A=67-419"/>
</dbReference>
<dbReference type="PDB" id="4NKF">
    <property type="method" value="X-ray"/>
    <property type="resolution" value="2.00 A"/>
    <property type="chains" value="A=67-419"/>
</dbReference>
<dbReference type="PDB" id="4NUA">
    <property type="method" value="X-ray"/>
    <property type="resolution" value="1.43 A"/>
    <property type="chains" value="A=67-419"/>
</dbReference>
<dbReference type="PDB" id="4OGU">
    <property type="method" value="X-ray"/>
    <property type="resolution" value="2.10 A"/>
    <property type="chains" value="A=67-419"/>
</dbReference>
<dbReference type="PDB" id="4P0V">
    <property type="method" value="X-ray"/>
    <property type="resolution" value="2.40 A"/>
    <property type="chains" value="A=73-419"/>
</dbReference>
<dbReference type="PDB" id="4P0W">
    <property type="method" value="X-ray"/>
    <property type="resolution" value="2.41 A"/>
    <property type="chains" value="A=72-419"/>
</dbReference>
<dbReference type="PDB" id="4P0X">
    <property type="method" value="X-ray"/>
    <property type="resolution" value="2.50 A"/>
    <property type="chains" value="A=72-419"/>
</dbReference>
<dbReference type="PDB" id="4PVX">
    <property type="method" value="X-ray"/>
    <property type="resolution" value="2.18 A"/>
    <property type="chains" value="F=67-419"/>
</dbReference>
<dbReference type="PDB" id="4PVY">
    <property type="method" value="X-ray"/>
    <property type="resolution" value="2.05 A"/>
    <property type="chains" value="F=67-419"/>
</dbReference>
<dbReference type="PDB" id="4Q23">
    <property type="method" value="X-ray"/>
    <property type="resolution" value="1.98 A"/>
    <property type="chains" value="A=67-419"/>
</dbReference>
<dbReference type="PDB" id="4QPF">
    <property type="method" value="X-ray"/>
    <property type="resolution" value="1.59 A"/>
    <property type="chains" value="A=67-419"/>
</dbReference>
<dbReference type="PDB" id="4QXS">
    <property type="method" value="X-ray"/>
    <property type="resolution" value="1.90 A"/>
    <property type="chains" value="F=67-419"/>
</dbReference>
<dbReference type="PDB" id="4RXA">
    <property type="method" value="X-ray"/>
    <property type="resolution" value="2.20 A"/>
    <property type="chains" value="A=72-419"/>
</dbReference>
<dbReference type="PDB" id="4XQR">
    <property type="method" value="X-ray"/>
    <property type="resolution" value="2.15 A"/>
    <property type="chains" value="F=67-419"/>
</dbReference>
<dbReference type="PDB" id="4XQS">
    <property type="method" value="X-ray"/>
    <property type="resolution" value="2.30 A"/>
    <property type="chains" value="F=67-419"/>
</dbReference>
<dbReference type="PDB" id="4XQT">
    <property type="method" value="X-ray"/>
    <property type="resolution" value="2.10 A"/>
    <property type="chains" value="F=67-419"/>
</dbReference>
<dbReference type="PDB" id="5CG5">
    <property type="method" value="Other"/>
    <property type="resolution" value="1.40 A"/>
    <property type="chains" value="A=74-419"/>
</dbReference>
<dbReference type="PDB" id="5CG6">
    <property type="method" value="Other"/>
    <property type="resolution" value="1.70 A"/>
    <property type="chains" value="A=74-419"/>
</dbReference>
<dbReference type="PDB" id="5DGM">
    <property type="method" value="X-ray"/>
    <property type="resolution" value="2.86 A"/>
    <property type="chains" value="F=72-419"/>
</dbReference>
<dbReference type="PDB" id="5DGN">
    <property type="method" value="X-ray"/>
    <property type="resolution" value="2.08 A"/>
    <property type="chains" value="F=72-419"/>
</dbReference>
<dbReference type="PDB" id="5DGS">
    <property type="method" value="X-ray"/>
    <property type="resolution" value="2.62 A"/>
    <property type="chains" value="F=72-419"/>
</dbReference>
<dbReference type="PDB" id="5DIQ">
    <property type="method" value="X-ray"/>
    <property type="resolution" value="2.10 A"/>
    <property type="chains" value="F=72-419"/>
</dbReference>
<dbReference type="PDB" id="5DJP">
    <property type="method" value="X-ray"/>
    <property type="resolution" value="2.40 A"/>
    <property type="chains" value="F=72-419"/>
</dbReference>
<dbReference type="PDB" id="5DJR">
    <property type="method" value="X-ray"/>
    <property type="resolution" value="2.40 A"/>
    <property type="chains" value="F=72-419"/>
</dbReference>
<dbReference type="PDB" id="5DJV">
    <property type="method" value="X-ray"/>
    <property type="resolution" value="2.30 A"/>
    <property type="chains" value="F=72-419"/>
</dbReference>
<dbReference type="PDB" id="5JA0">
    <property type="method" value="X-ray"/>
    <property type="resolution" value="1.90 A"/>
    <property type="chains" value="F=67-419"/>
</dbReference>
<dbReference type="PDB" id="5JUZ">
    <property type="method" value="X-ray"/>
    <property type="resolution" value="2.40 A"/>
    <property type="chains" value="F=67-419"/>
</dbReference>
<dbReference type="PDB" id="5JV0">
    <property type="method" value="X-ray"/>
    <property type="resolution" value="2.40 A"/>
    <property type="chains" value="F=67-419"/>
</dbReference>
<dbReference type="PDB" id="5JV1">
    <property type="method" value="X-ray"/>
    <property type="resolution" value="2.30 A"/>
    <property type="chains" value="F=67-419"/>
</dbReference>
<dbReference type="PDB" id="5JV2">
    <property type="method" value="X-ray"/>
    <property type="resolution" value="2.30 A"/>
    <property type="chains" value="F=67-419"/>
</dbReference>
<dbReference type="PDB" id="5KSX">
    <property type="method" value="X-ray"/>
    <property type="resolution" value="2.65 A"/>
    <property type="chains" value="F=67-419"/>
</dbReference>
<dbReference type="PDB" id="5YGI">
    <property type="method" value="X-ray"/>
    <property type="resolution" value="2.18 A"/>
    <property type="chains" value="A=72-419"/>
</dbReference>
<dbReference type="PDB" id="6N7Y">
    <property type="method" value="X-ray"/>
    <property type="resolution" value="2.00 A"/>
    <property type="chains" value="F=67-419"/>
</dbReference>
<dbReference type="PDB" id="6N7Z">
    <property type="method" value="X-ray"/>
    <property type="resolution" value="2.55 A"/>
    <property type="chains" value="F=67-419"/>
</dbReference>
<dbReference type="PDB" id="6N82">
    <property type="method" value="X-ray"/>
    <property type="resolution" value="2.00 A"/>
    <property type="chains" value="F=67-419"/>
</dbReference>
<dbReference type="PDB" id="6N83">
    <property type="method" value="X-ray"/>
    <property type="resolution" value="2.00 A"/>
    <property type="chains" value="F=67-419"/>
</dbReference>
<dbReference type="PDB" id="6OAG">
    <property type="method" value="X-ray"/>
    <property type="resolution" value="2.30 A"/>
    <property type="chains" value="F=67-419"/>
</dbReference>
<dbReference type="PDB" id="6OAH">
    <property type="method" value="X-ray"/>
    <property type="resolution" value="2.20 A"/>
    <property type="chains" value="F=67-419"/>
</dbReference>
<dbReference type="PDBsum" id="1YQ7"/>
<dbReference type="PDBsum" id="1YV5"/>
<dbReference type="PDBsum" id="1ZW5"/>
<dbReference type="PDBsum" id="2F7M"/>
<dbReference type="PDBsum" id="2F89"/>
<dbReference type="PDBsum" id="2F8C"/>
<dbReference type="PDBsum" id="2F8Z"/>
<dbReference type="PDBsum" id="2F92"/>
<dbReference type="PDBsum" id="2F94"/>
<dbReference type="PDBsum" id="2F9K"/>
<dbReference type="PDBsum" id="2OPM"/>
<dbReference type="PDBsum" id="2OPN"/>
<dbReference type="PDBsum" id="2QIS"/>
<dbReference type="PDBsum" id="2RAH"/>
<dbReference type="PDBsum" id="2VF6"/>
<dbReference type="PDBsum" id="3B7L"/>
<dbReference type="PDBsum" id="3CP6"/>
<dbReference type="PDBsum" id="3N1V"/>
<dbReference type="PDBsum" id="3N1W"/>
<dbReference type="PDBsum" id="3N3L"/>
<dbReference type="PDBsum" id="3N45"/>
<dbReference type="PDBsum" id="3N46"/>
<dbReference type="PDBsum" id="3N49"/>
<dbReference type="PDBsum" id="3N5H"/>
<dbReference type="PDBsum" id="3N5J"/>
<dbReference type="PDBsum" id="3N6K"/>
<dbReference type="PDBsum" id="3RYE"/>
<dbReference type="PDBsum" id="3S4J"/>
<dbReference type="PDBsum" id="4DEM"/>
<dbReference type="PDBsum" id="4GA3"/>
<dbReference type="PDBsum" id="4H5C"/>
<dbReference type="PDBsum" id="4H5D"/>
<dbReference type="PDBsum" id="4H5E"/>
<dbReference type="PDBsum" id="4JVJ"/>
<dbReference type="PDBsum" id="4KFA"/>
<dbReference type="PDBsum" id="4KPD"/>
<dbReference type="PDBsum" id="4KPJ"/>
<dbReference type="PDBsum" id="4KQ5"/>
<dbReference type="PDBsum" id="4KQS"/>
<dbReference type="PDBsum" id="4KQU"/>
<dbReference type="PDBsum" id="4L2X"/>
<dbReference type="PDBsum" id="4LFV"/>
<dbReference type="PDBsum" id="4LPG"/>
<dbReference type="PDBsum" id="4LPH"/>
<dbReference type="PDBsum" id="4N1Z"/>
<dbReference type="PDBsum" id="4N9U"/>
<dbReference type="PDBsum" id="4NFI"/>
<dbReference type="PDBsum" id="4NFJ"/>
<dbReference type="PDBsum" id="4NFK"/>
<dbReference type="PDBsum" id="4NG6"/>
<dbReference type="PDBsum" id="4NKE"/>
<dbReference type="PDBsum" id="4NKF"/>
<dbReference type="PDBsum" id="4NUA"/>
<dbReference type="PDBsum" id="4OGU"/>
<dbReference type="PDBsum" id="4P0V"/>
<dbReference type="PDBsum" id="4P0W"/>
<dbReference type="PDBsum" id="4P0X"/>
<dbReference type="PDBsum" id="4PVX"/>
<dbReference type="PDBsum" id="4PVY"/>
<dbReference type="PDBsum" id="4Q23"/>
<dbReference type="PDBsum" id="4QPF"/>
<dbReference type="PDBsum" id="4QXS"/>
<dbReference type="PDBsum" id="4RXA"/>
<dbReference type="PDBsum" id="4XQR"/>
<dbReference type="PDBsum" id="4XQS"/>
<dbReference type="PDBsum" id="4XQT"/>
<dbReference type="PDBsum" id="5CG5"/>
<dbReference type="PDBsum" id="5CG6"/>
<dbReference type="PDBsum" id="5DGM"/>
<dbReference type="PDBsum" id="5DGN"/>
<dbReference type="PDBsum" id="5DGS"/>
<dbReference type="PDBsum" id="5DIQ"/>
<dbReference type="PDBsum" id="5DJP"/>
<dbReference type="PDBsum" id="5DJR"/>
<dbReference type="PDBsum" id="5DJV"/>
<dbReference type="PDBsum" id="5JA0"/>
<dbReference type="PDBsum" id="5JUZ"/>
<dbReference type="PDBsum" id="5JV0"/>
<dbReference type="PDBsum" id="5JV1"/>
<dbReference type="PDBsum" id="5JV2"/>
<dbReference type="PDBsum" id="5KSX"/>
<dbReference type="PDBsum" id="5YGI"/>
<dbReference type="PDBsum" id="6N7Y"/>
<dbReference type="PDBsum" id="6N7Z"/>
<dbReference type="PDBsum" id="6N82"/>
<dbReference type="PDBsum" id="6N83"/>
<dbReference type="PDBsum" id="6OAG"/>
<dbReference type="PDBsum" id="6OAH"/>
<dbReference type="SMR" id="P14324"/>
<dbReference type="BioGRID" id="108517">
    <property type="interactions" value="163"/>
</dbReference>
<dbReference type="CORUM" id="P14324"/>
<dbReference type="DIP" id="DIP-50059N"/>
<dbReference type="FunCoup" id="P14324">
    <property type="interactions" value="2464"/>
</dbReference>
<dbReference type="IntAct" id="P14324">
    <property type="interactions" value="53"/>
</dbReference>
<dbReference type="MINT" id="P14324"/>
<dbReference type="STRING" id="9606.ENSP00000349078"/>
<dbReference type="BindingDB" id="P14324"/>
<dbReference type="ChEMBL" id="CHEMBL1782"/>
<dbReference type="DrugBank" id="DB07409">
    <property type="generic name" value="(1-HYDROXY-1-PHOSPHONO-2-[1,1';4',1'']TERPHENYL-3-YL-ETHYL)-PHOSPHONIC ACID"/>
</dbReference>
<dbReference type="DrugBank" id="DB06830">
    <property type="generic name" value="(1-HYDROXYHEPTANE-1,1-DIYL)BIS(PHOSPHONIC ACID)"/>
</dbReference>
<dbReference type="DrugBank" id="DB08180">
    <property type="generic name" value="2-[METHYL-(5-GERANYL-4-METHYL-PENT-3-ENYL)-AMINO]-ETHYL-DIPHOSPHATE"/>
</dbReference>
<dbReference type="DrugBank" id="DB07426">
    <property type="generic name" value="[1-HYDROXY-2-(1,1':3',1''-TERPHENYL-3-YLOXY)ETHANE-1,1-DIYL]BIS(PHOSPHONIC ACID)"/>
</dbReference>
<dbReference type="DrugBank" id="DB07410">
    <property type="generic name" value="[2-(3-DIBENZOFURAN-4-YL-PHENYL)-1-HYDROXY-1-PHOSPHONO-ETHYL]-PHOSPHONIC ACID"/>
</dbReference>
<dbReference type="DrugBank" id="DB00630">
    <property type="generic name" value="Alendronic acid"/>
</dbReference>
<dbReference type="DrugBank" id="DB07404">
    <property type="generic name" value="BPH-608"/>
</dbReference>
<dbReference type="DrugBank" id="DB01785">
    <property type="generic name" value="Dimethylallyl Diphosphate"/>
</dbReference>
<dbReference type="DrugBank" id="DB07780">
    <property type="generic name" value="Farnesyl diphosphate"/>
</dbReference>
<dbReference type="DrugBank" id="DB02552">
    <property type="generic name" value="Geranyl Diphosphate"/>
</dbReference>
<dbReference type="DrugBank" id="DB07841">
    <property type="generic name" value="Geranylgeranyl diphosphate"/>
</dbReference>
<dbReference type="DrugBank" id="DB00710">
    <property type="generic name" value="Ibandronate"/>
</dbReference>
<dbReference type="DrugBank" id="DB06255">
    <property type="generic name" value="Incadronic acid"/>
</dbReference>
<dbReference type="DrugBank" id="DB04714">
    <property type="generic name" value="ISOPENTENYL PYROPHOSPHATE"/>
</dbReference>
<dbReference type="DrugBank" id="DB02508">
    <property type="generic name" value="Isopentyl Pyrophosphate"/>
</dbReference>
<dbReference type="DrugBank" id="DB07873">
    <property type="generic name" value="Lauryl alcohol diphosphonic acid"/>
</dbReference>
<dbReference type="DrugBank" id="DB06548">
    <property type="generic name" value="Minodronic acid"/>
</dbReference>
<dbReference type="DrugBank" id="DB11620">
    <property type="generic name" value="Neridronic Acid"/>
</dbReference>
<dbReference type="DrugBank" id="DB00282">
    <property type="generic name" value="Pamidronic acid"/>
</dbReference>
<dbReference type="DrugBank" id="DB04160">
    <property type="generic name" value="Pyrophosphoric acid"/>
</dbReference>
<dbReference type="DrugBank" id="DB00884">
    <property type="generic name" value="Risedronic acid"/>
</dbReference>
<dbReference type="DrugBank" id="DB04960">
    <property type="generic name" value="Tipifarnib"/>
</dbReference>
<dbReference type="DrugBank" id="DB00399">
    <property type="generic name" value="Zoledronic acid"/>
</dbReference>
<dbReference type="DrugCentral" id="P14324"/>
<dbReference type="GuidetoPHARMACOLOGY" id="644"/>
<dbReference type="SwissLipids" id="SLP:000001248"/>
<dbReference type="SwissLipids" id="SLP:000001252">
    <molecule id="P14324-2"/>
</dbReference>
<dbReference type="GlyGen" id="P14324">
    <property type="glycosylation" value="1 site, 1 O-linked glycan (1 site)"/>
</dbReference>
<dbReference type="iPTMnet" id="P14324"/>
<dbReference type="MetOSite" id="P14324"/>
<dbReference type="PhosphoSitePlus" id="P14324"/>
<dbReference type="SwissPalm" id="P14324"/>
<dbReference type="BioMuta" id="FDPS"/>
<dbReference type="DMDM" id="215274250"/>
<dbReference type="jPOST" id="P14324"/>
<dbReference type="MassIVE" id="P14324"/>
<dbReference type="PaxDb" id="9606-ENSP00000349078"/>
<dbReference type="PeptideAtlas" id="P14324"/>
<dbReference type="ProteomicsDB" id="19455"/>
<dbReference type="ProteomicsDB" id="53046">
    <molecule id="P14324-1"/>
</dbReference>
<dbReference type="Pumba" id="P14324"/>
<dbReference type="TopDownProteomics" id="P14324-1">
    <molecule id="P14324-1"/>
</dbReference>
<dbReference type="Antibodypedia" id="34190">
    <property type="antibodies" value="453 antibodies from 37 providers"/>
</dbReference>
<dbReference type="DNASU" id="2224"/>
<dbReference type="Ensembl" id="ENST00000356657.10">
    <molecule id="P14324-1"/>
    <property type="protein sequence ID" value="ENSP00000349078.6"/>
    <property type="gene ID" value="ENSG00000160752.15"/>
</dbReference>
<dbReference type="Ensembl" id="ENST00000368356.9">
    <molecule id="P14324-1"/>
    <property type="protein sequence ID" value="ENSP00000357340.4"/>
    <property type="gene ID" value="ENSG00000160752.15"/>
</dbReference>
<dbReference type="Ensembl" id="ENST00000447866.5">
    <molecule id="P14324-2"/>
    <property type="protein sequence ID" value="ENSP00000391755.1"/>
    <property type="gene ID" value="ENSG00000160752.15"/>
</dbReference>
<dbReference type="Ensembl" id="ENST00000467076.5">
    <molecule id="P14324-2"/>
    <property type="protein sequence ID" value="ENSP00000480142.1"/>
    <property type="gene ID" value="ENSG00000160752.15"/>
</dbReference>
<dbReference type="Ensembl" id="ENST00000612683.1">
    <molecule id="P14324-2"/>
    <property type="protein sequence ID" value="ENSP00000478235.1"/>
    <property type="gene ID" value="ENSG00000160752.15"/>
</dbReference>
<dbReference type="GeneID" id="2224"/>
<dbReference type="KEGG" id="hsa:2224"/>
<dbReference type="MANE-Select" id="ENST00000368356.9">
    <property type="protein sequence ID" value="ENSP00000357340.4"/>
    <property type="RefSeq nucleotide sequence ID" value="NM_002004.4"/>
    <property type="RefSeq protein sequence ID" value="NP_001995.1"/>
</dbReference>
<dbReference type="UCSC" id="uc001fkc.3">
    <molecule id="P14324-1"/>
    <property type="organism name" value="human"/>
</dbReference>
<dbReference type="AGR" id="HGNC:3631"/>
<dbReference type="CTD" id="2224"/>
<dbReference type="DisGeNET" id="2224"/>
<dbReference type="GeneCards" id="FDPS"/>
<dbReference type="HGNC" id="HGNC:3631">
    <property type="gene designation" value="FDPS"/>
</dbReference>
<dbReference type="HPA" id="ENSG00000160752">
    <property type="expression patterns" value="Tissue enhanced (liver)"/>
</dbReference>
<dbReference type="MalaCards" id="FDPS"/>
<dbReference type="MIM" id="134629">
    <property type="type" value="gene"/>
</dbReference>
<dbReference type="MIM" id="616631">
    <property type="type" value="phenotype"/>
</dbReference>
<dbReference type="neXtProt" id="NX_P14324"/>
<dbReference type="OpenTargets" id="ENSG00000160752"/>
<dbReference type="Orphanet" id="79152">
    <property type="disease" value="Disseminated superficial actinic porokeratosis"/>
</dbReference>
<dbReference type="PharmGKB" id="PA28075"/>
<dbReference type="VEuPathDB" id="HostDB:ENSG00000160752"/>
<dbReference type="eggNOG" id="KOG0711">
    <property type="taxonomic scope" value="Eukaryota"/>
</dbReference>
<dbReference type="GeneTree" id="ENSGT00900000141074"/>
<dbReference type="HOGENOM" id="CLU_028376_0_1_1"/>
<dbReference type="InParanoid" id="P14324"/>
<dbReference type="OMA" id="CSWVVNQ"/>
<dbReference type="OrthoDB" id="10257492at2759"/>
<dbReference type="PAN-GO" id="P14324">
    <property type="GO annotations" value="4 GO annotations based on evolutionary models"/>
</dbReference>
<dbReference type="PhylomeDB" id="P14324"/>
<dbReference type="TreeFam" id="TF300897"/>
<dbReference type="BioCyc" id="MetaCyc:ENSG00000160752-MONOMER"/>
<dbReference type="BRENDA" id="2.5.1.1">
    <property type="organism ID" value="2681"/>
</dbReference>
<dbReference type="BRENDA" id="2.5.1.10">
    <property type="organism ID" value="2681"/>
</dbReference>
<dbReference type="PathwayCommons" id="P14324"/>
<dbReference type="Reactome" id="R-HSA-191273">
    <property type="pathway name" value="Cholesterol biosynthesis"/>
</dbReference>
<dbReference type="Reactome" id="R-HSA-2426168">
    <property type="pathway name" value="Activation of gene expression by SREBF (SREBP)"/>
</dbReference>
<dbReference type="SABIO-RK" id="P14324"/>
<dbReference type="SignaLink" id="P14324"/>
<dbReference type="UniPathway" id="UPA00259">
    <property type="reaction ID" value="UER00368"/>
</dbReference>
<dbReference type="UniPathway" id="UPA00260">
    <property type="reaction ID" value="UER00369"/>
</dbReference>
<dbReference type="BioGRID-ORCS" id="2224">
    <property type="hits" value="424 hits in 1180 CRISPR screens"/>
</dbReference>
<dbReference type="CD-CODE" id="FB4E32DD">
    <property type="entry name" value="Presynaptic clusters and postsynaptic densities"/>
</dbReference>
<dbReference type="ChiTaRS" id="FDPS">
    <property type="organism name" value="human"/>
</dbReference>
<dbReference type="EvolutionaryTrace" id="P14324"/>
<dbReference type="GenomeRNAi" id="2224"/>
<dbReference type="Pharos" id="P14324">
    <property type="development level" value="Tclin"/>
</dbReference>
<dbReference type="PRO" id="PR:P14324"/>
<dbReference type="Proteomes" id="UP000005640">
    <property type="component" value="Chromosome 1"/>
</dbReference>
<dbReference type="RNAct" id="P14324">
    <property type="molecule type" value="protein"/>
</dbReference>
<dbReference type="Bgee" id="ENSG00000160752">
    <property type="expression patterns" value="Expressed in adrenal tissue and 208 other cell types or tissues"/>
</dbReference>
<dbReference type="ExpressionAtlas" id="P14324">
    <property type="expression patterns" value="baseline and differential"/>
</dbReference>
<dbReference type="GO" id="GO:0005737">
    <property type="term" value="C:cytoplasm"/>
    <property type="evidence" value="ECO:0000318"/>
    <property type="project" value="GO_Central"/>
</dbReference>
<dbReference type="GO" id="GO:0005829">
    <property type="term" value="C:cytosol"/>
    <property type="evidence" value="ECO:0000314"/>
    <property type="project" value="HPA"/>
</dbReference>
<dbReference type="GO" id="GO:0005759">
    <property type="term" value="C:mitochondrial matrix"/>
    <property type="evidence" value="ECO:0000314"/>
    <property type="project" value="FlyBase"/>
</dbReference>
<dbReference type="GO" id="GO:0005654">
    <property type="term" value="C:nucleoplasm"/>
    <property type="evidence" value="ECO:0000314"/>
    <property type="project" value="HPA"/>
</dbReference>
<dbReference type="GO" id="GO:0005777">
    <property type="term" value="C:peroxisome"/>
    <property type="evidence" value="ECO:0000314"/>
    <property type="project" value="FlyBase"/>
</dbReference>
<dbReference type="GO" id="GO:0004337">
    <property type="term" value="F:(2E,6E)-farnesyl diphosphate synthase activity"/>
    <property type="evidence" value="ECO:0000318"/>
    <property type="project" value="GO_Central"/>
</dbReference>
<dbReference type="GO" id="GO:0004161">
    <property type="term" value="F:dimethylallyltranstransferase activity"/>
    <property type="evidence" value="ECO:0000318"/>
    <property type="project" value="GO_Central"/>
</dbReference>
<dbReference type="GO" id="GO:0046872">
    <property type="term" value="F:metal ion binding"/>
    <property type="evidence" value="ECO:0007669"/>
    <property type="project" value="UniProtKB-KW"/>
</dbReference>
<dbReference type="GO" id="GO:0003723">
    <property type="term" value="F:RNA binding"/>
    <property type="evidence" value="ECO:0007005"/>
    <property type="project" value="UniProtKB"/>
</dbReference>
<dbReference type="GO" id="GO:0006695">
    <property type="term" value="P:cholesterol biosynthetic process"/>
    <property type="evidence" value="ECO:0000304"/>
    <property type="project" value="ProtInc"/>
</dbReference>
<dbReference type="GO" id="GO:0045337">
    <property type="term" value="P:farnesyl diphosphate biosynthetic process"/>
    <property type="evidence" value="ECO:0000318"/>
    <property type="project" value="GO_Central"/>
</dbReference>
<dbReference type="GO" id="GO:0033384">
    <property type="term" value="P:geranyl diphosphate biosynthetic process"/>
    <property type="evidence" value="ECO:0007669"/>
    <property type="project" value="UniProtKB-UniPathway"/>
</dbReference>
<dbReference type="CDD" id="cd00685">
    <property type="entry name" value="Trans_IPPS_HT"/>
    <property type="match status" value="1"/>
</dbReference>
<dbReference type="FunFam" id="1.10.600.10:FF:000052">
    <property type="entry name" value="Farnesyl pyrophosphate synthase"/>
    <property type="match status" value="1"/>
</dbReference>
<dbReference type="Gene3D" id="1.10.600.10">
    <property type="entry name" value="Farnesyl Diphosphate Synthase"/>
    <property type="match status" value="1"/>
</dbReference>
<dbReference type="InterPro" id="IPR039702">
    <property type="entry name" value="FPS1-like"/>
</dbReference>
<dbReference type="InterPro" id="IPR008949">
    <property type="entry name" value="Isoprenoid_synthase_dom_sf"/>
</dbReference>
<dbReference type="InterPro" id="IPR000092">
    <property type="entry name" value="Polyprenyl_synt"/>
</dbReference>
<dbReference type="InterPro" id="IPR033749">
    <property type="entry name" value="Polyprenyl_synt_CS"/>
</dbReference>
<dbReference type="PANTHER" id="PTHR11525:SF0">
    <property type="entry name" value="FARNESYL PYROPHOSPHATE SYNTHASE"/>
    <property type="match status" value="1"/>
</dbReference>
<dbReference type="PANTHER" id="PTHR11525">
    <property type="entry name" value="FARNESYL-PYROPHOSPHATE SYNTHETASE"/>
    <property type="match status" value="1"/>
</dbReference>
<dbReference type="Pfam" id="PF00348">
    <property type="entry name" value="polyprenyl_synt"/>
    <property type="match status" value="1"/>
</dbReference>
<dbReference type="SFLD" id="SFLDS00005">
    <property type="entry name" value="Isoprenoid_Synthase_Type_I"/>
    <property type="match status" value="1"/>
</dbReference>
<dbReference type="SFLD" id="SFLDG01017">
    <property type="entry name" value="Polyprenyl_Transferase_Like"/>
    <property type="match status" value="1"/>
</dbReference>
<dbReference type="SUPFAM" id="SSF48576">
    <property type="entry name" value="Terpenoid synthases"/>
    <property type="match status" value="1"/>
</dbReference>
<dbReference type="PROSITE" id="PS00723">
    <property type="entry name" value="POLYPRENYL_SYNTHASE_1"/>
    <property type="match status" value="1"/>
</dbReference>
<dbReference type="PROSITE" id="PS00444">
    <property type="entry name" value="POLYPRENYL_SYNTHASE_2"/>
    <property type="match status" value="1"/>
</dbReference>
<name>FPPS_HUMAN</name>
<gene>
    <name evidence="12" type="primary">FDPS</name>
    <name type="synonym">FPS</name>
    <name type="synonym">KIAA1293</name>
</gene>
<feature type="chain" id="PRO_0000123944" description="Farnesyl pyrophosphate synthase">
    <location>
        <begin position="1"/>
        <end position="419"/>
    </location>
</feature>
<feature type="binding site" evidence="3 13">
    <location>
        <position position="123"/>
    </location>
    <ligand>
        <name>isopentenyl diphosphate</name>
        <dbReference type="ChEBI" id="CHEBI:128769"/>
    </ligand>
</feature>
<feature type="binding site" evidence="3 13">
    <location>
        <position position="126"/>
    </location>
    <ligand>
        <name>isopentenyl diphosphate</name>
        <dbReference type="ChEBI" id="CHEBI:128769"/>
    </ligand>
</feature>
<feature type="binding site" evidence="3 13">
    <location>
        <position position="162"/>
    </location>
    <ligand>
        <name>isopentenyl diphosphate</name>
        <dbReference type="ChEBI" id="CHEBI:128769"/>
    </ligand>
</feature>
<feature type="binding site" evidence="3 13">
    <location>
        <position position="169"/>
    </location>
    <ligand>
        <name>Mg(2+)</name>
        <dbReference type="ChEBI" id="CHEBI:18420"/>
        <label>1</label>
    </ligand>
</feature>
<feature type="binding site" evidence="3 13">
    <location>
        <position position="169"/>
    </location>
    <ligand>
        <name>Mg(2+)</name>
        <dbReference type="ChEBI" id="CHEBI:18420"/>
        <label>2</label>
    </ligand>
</feature>
<feature type="binding site" evidence="3 13">
    <location>
        <position position="173"/>
    </location>
    <ligand>
        <name>Mg(2+)</name>
        <dbReference type="ChEBI" id="CHEBI:18420"/>
        <label>1</label>
    </ligand>
</feature>
<feature type="binding site" evidence="3 13">
    <location>
        <position position="173"/>
    </location>
    <ligand>
        <name>Mg(2+)</name>
        <dbReference type="ChEBI" id="CHEBI:18420"/>
        <label>2</label>
    </ligand>
</feature>
<feature type="binding site">
    <location>
        <position position="178"/>
    </location>
    <ligand>
        <name>dimethylallyl diphosphate</name>
        <dbReference type="ChEBI" id="CHEBI:57623"/>
    </ligand>
</feature>
<feature type="binding site" evidence="3 13">
    <location>
        <position position="179"/>
    </location>
    <ligand>
        <name>isopentenyl diphosphate</name>
        <dbReference type="ChEBI" id="CHEBI:128769"/>
    </ligand>
</feature>
<feature type="binding site">
    <location>
        <position position="266"/>
    </location>
    <ligand>
        <name>dimethylallyl diphosphate</name>
        <dbReference type="ChEBI" id="CHEBI:57623"/>
    </ligand>
</feature>
<feature type="binding site">
    <location>
        <position position="267"/>
    </location>
    <ligand>
        <name>dimethylallyl diphosphate</name>
        <dbReference type="ChEBI" id="CHEBI:57623"/>
    </ligand>
</feature>
<feature type="binding site">
    <location>
        <position position="306"/>
    </location>
    <ligand>
        <name>dimethylallyl diphosphate</name>
        <dbReference type="ChEBI" id="CHEBI:57623"/>
    </ligand>
</feature>
<feature type="binding site">
    <location>
        <position position="323"/>
    </location>
    <ligand>
        <name>dimethylallyl diphosphate</name>
        <dbReference type="ChEBI" id="CHEBI:57623"/>
    </ligand>
</feature>
<feature type="binding site" evidence="1">
    <location>
        <position position="332"/>
    </location>
    <ligand>
        <name>dimethylallyl diphosphate</name>
        <dbReference type="ChEBI" id="CHEBI:57623"/>
    </ligand>
</feature>
<feature type="site" description="Important for determining product chain length" evidence="1">
    <location>
        <position position="164"/>
    </location>
</feature>
<feature type="site" description="Important for determining product chain length" evidence="1">
    <location>
        <position position="165"/>
    </location>
</feature>
<feature type="modified residue" description="N6-(2-hydroxyisobutyryl)lysine; alternate" evidence="8">
    <location>
        <position position="123"/>
    </location>
</feature>
<feature type="modified residue" description="N6-acetyllysine; alternate" evidence="14">
    <location>
        <position position="123"/>
    </location>
</feature>
<feature type="modified residue" description="N6-acetyllysine" evidence="14">
    <location>
        <position position="353"/>
    </location>
</feature>
<feature type="splice variant" id="VSP_046958" description="In isoform 2." evidence="9 10">
    <location>
        <begin position="1"/>
        <end position="66"/>
    </location>
</feature>
<feature type="sequence variant" id="VAR_075062" description="In POROK9; dbSNP:rs863225241." evidence="7">
    <original>R</original>
    <variation>Q</variation>
    <location>
        <position position="179"/>
    </location>
</feature>
<feature type="sequence variant" id="VAR_061274" description="In dbSNP:rs41314549.">
    <original>V</original>
    <variation>A</variation>
    <location>
        <position position="364"/>
    </location>
</feature>
<feature type="sequence variant" id="VAR_049644" description="In dbSNP:rs17456.">
    <original>I</original>
    <variation>V</variation>
    <location>
        <position position="391"/>
    </location>
</feature>
<feature type="sequence conflict" description="In Ref. 7; BQ062616." evidence="11" ref="7">
    <original>R</original>
    <variation>K</variation>
    <location>
        <position position="141"/>
    </location>
</feature>
<feature type="sequence conflict" description="In Ref. 1; AAA52423." evidence="11" ref="1">
    <original>I</original>
    <variation>T</variation>
    <location>
        <position position="182"/>
    </location>
</feature>
<feature type="sequence conflict" description="In Ref. 7; BQ062616." evidence="11" ref="7">
    <original>G</original>
    <variation>R</variation>
    <location>
        <position position="284"/>
    </location>
</feature>
<feature type="helix" evidence="17">
    <location>
        <begin position="76"/>
        <end position="85"/>
    </location>
</feature>
<feature type="helix" evidence="17">
    <location>
        <begin position="87"/>
        <end position="94"/>
    </location>
</feature>
<feature type="helix" evidence="15">
    <location>
        <begin position="97"/>
        <end position="100"/>
    </location>
</feature>
<feature type="helix" evidence="17">
    <location>
        <begin position="102"/>
        <end position="104"/>
    </location>
</feature>
<feature type="helix" evidence="17">
    <location>
        <begin position="105"/>
        <end position="118"/>
    </location>
</feature>
<feature type="strand" evidence="17">
    <location>
        <begin position="119"/>
        <end position="122"/>
    </location>
</feature>
<feature type="helix" evidence="17">
    <location>
        <begin position="125"/>
        <end position="137"/>
    </location>
</feature>
<feature type="helix" evidence="17">
    <location>
        <begin position="140"/>
        <end position="142"/>
    </location>
</feature>
<feature type="helix" evidence="17">
    <location>
        <begin position="145"/>
        <end position="172"/>
    </location>
</feature>
<feature type="strand" evidence="18">
    <location>
        <begin position="176"/>
        <end position="178"/>
    </location>
</feature>
<feature type="helix" evidence="17">
    <location>
        <begin position="184"/>
        <end position="186"/>
    </location>
</feature>
<feature type="turn" evidence="17">
    <location>
        <begin position="188"/>
        <end position="190"/>
    </location>
</feature>
<feature type="helix" evidence="17">
    <location>
        <begin position="191"/>
        <end position="193"/>
    </location>
</feature>
<feature type="helix" evidence="17">
    <location>
        <begin position="194"/>
        <end position="213"/>
    </location>
</feature>
<feature type="helix" evidence="17">
    <location>
        <begin position="219"/>
        <end position="243"/>
    </location>
</feature>
<feature type="strand" evidence="16">
    <location>
        <begin position="246"/>
        <end position="248"/>
    </location>
</feature>
<feature type="helix" evidence="17">
    <location>
        <begin position="251"/>
        <end position="253"/>
    </location>
</feature>
<feature type="helix" evidence="17">
    <location>
        <begin position="256"/>
        <end position="266"/>
    </location>
</feature>
<feature type="helix" evidence="17">
    <location>
        <begin position="268"/>
        <end position="271"/>
    </location>
</feature>
<feature type="helix" evidence="17">
    <location>
        <begin position="273"/>
        <end position="282"/>
    </location>
</feature>
<feature type="helix" evidence="17">
    <location>
        <begin position="288"/>
        <end position="315"/>
    </location>
</feature>
<feature type="helix" evidence="17">
    <location>
        <begin position="318"/>
        <end position="321"/>
    </location>
</feature>
<feature type="turn" evidence="17">
    <location>
        <begin position="327"/>
        <end position="331"/>
    </location>
</feature>
<feature type="helix" evidence="17">
    <location>
        <begin position="335"/>
        <end position="343"/>
    </location>
</feature>
<feature type="helix" evidence="17">
    <location>
        <begin position="346"/>
        <end position="355"/>
    </location>
</feature>
<feature type="helix" evidence="17">
    <location>
        <begin position="361"/>
        <end position="373"/>
    </location>
</feature>
<feature type="helix" evidence="17">
    <location>
        <begin position="376"/>
        <end position="398"/>
    </location>
</feature>
<feature type="helix" evidence="17">
    <location>
        <begin position="404"/>
        <end position="414"/>
    </location>
</feature>
<feature type="modified residue" description="N-acetylmethionine" evidence="11">
    <location sequence="P14324-2">
        <position position="1"/>
    </location>
</feature>
<accession>P14324</accession>
<accession>D3DV91</accession>
<accession>E9PCI9</accession>
<accession>Q96G29</accession>
<protein>
    <recommendedName>
        <fullName evidence="11">Farnesyl pyrophosphate synthase</fullName>
        <shortName>FPP synthase</shortName>
        <shortName>FPS</shortName>
        <ecNumber evidence="3">2.5.1.10</ecNumber>
    </recommendedName>
    <alternativeName>
        <fullName>(2E,6E)-farnesyl diphosphate synthase</fullName>
    </alternativeName>
    <alternativeName>
        <fullName>Dimethylallyltranstransferase</fullName>
        <ecNumber evidence="3">2.5.1.1</ecNumber>
    </alternativeName>
    <alternativeName>
        <fullName>Farnesyl diphosphate synthase</fullName>
    </alternativeName>
    <alternativeName>
        <fullName>Geranyltranstransferase</fullName>
    </alternativeName>
</protein>
<proteinExistence type="evidence at protein level"/>
<keyword id="KW-0002">3D-structure</keyword>
<keyword id="KW-0007">Acetylation</keyword>
<keyword id="KW-0025">Alternative splicing</keyword>
<keyword id="KW-0152">Cholesterol biosynthesis</keyword>
<keyword id="KW-0153">Cholesterol metabolism</keyword>
<keyword id="KW-0963">Cytoplasm</keyword>
<keyword id="KW-0225">Disease variant</keyword>
<keyword id="KW-0945">Host-virus interaction</keyword>
<keyword id="KW-0379">Hydroxylation</keyword>
<keyword id="KW-0414">Isoprene biosynthesis</keyword>
<keyword id="KW-0444">Lipid biosynthesis</keyword>
<keyword id="KW-0443">Lipid metabolism</keyword>
<keyword id="KW-0460">Magnesium</keyword>
<keyword id="KW-0479">Metal-binding</keyword>
<keyword id="KW-1267">Proteomics identification</keyword>
<keyword id="KW-1185">Reference proteome</keyword>
<keyword id="KW-0752">Steroid biosynthesis</keyword>
<keyword id="KW-0753">Steroid metabolism</keyword>
<keyword id="KW-0756">Sterol biosynthesis</keyword>
<keyword id="KW-1207">Sterol metabolism</keyword>
<keyword id="KW-0808">Transferase</keyword>
<evidence type="ECO:0000250" key="1"/>
<evidence type="ECO:0000269" key="2">
    <source>
    </source>
</evidence>
<evidence type="ECO:0000269" key="3">
    <source>
    </source>
</evidence>
<evidence type="ECO:0000269" key="4">
    <source>
    </source>
</evidence>
<evidence type="ECO:0000269" key="5">
    <source>
    </source>
</evidence>
<evidence type="ECO:0000269" key="6">
    <source>
    </source>
</evidence>
<evidence type="ECO:0000269" key="7">
    <source>
    </source>
</evidence>
<evidence type="ECO:0000269" key="8">
    <source>
    </source>
</evidence>
<evidence type="ECO:0000303" key="9">
    <source>
    </source>
</evidence>
<evidence type="ECO:0000303" key="10">
    <source ref="7"/>
</evidence>
<evidence type="ECO:0000305" key="11"/>
<evidence type="ECO:0000312" key="12">
    <source>
        <dbReference type="HGNC" id="HGNC:3631"/>
    </source>
</evidence>
<evidence type="ECO:0007744" key="13">
    <source>
        <dbReference type="PDB" id="1ZW5"/>
    </source>
</evidence>
<evidence type="ECO:0007744" key="14">
    <source>
    </source>
</evidence>
<evidence type="ECO:0007829" key="15">
    <source>
        <dbReference type="PDB" id="4DEM"/>
    </source>
</evidence>
<evidence type="ECO:0007829" key="16">
    <source>
        <dbReference type="PDB" id="4JVJ"/>
    </source>
</evidence>
<evidence type="ECO:0007829" key="17">
    <source>
        <dbReference type="PDB" id="4NUA"/>
    </source>
</evidence>
<evidence type="ECO:0007829" key="18">
    <source>
        <dbReference type="PDB" id="4QXS"/>
    </source>
</evidence>
<sequence length="419" mass="48275">MPLSRWLRSVGVFLLPAPYWAPRERWLGSLRRPSLVHGYPVLAWHSARCWCQAWTEEPRALCSSLRMNGDQNSDVYAQEKQDFVQHFSQIVRVLTEDEMGHPEIGDAIARLKEVLEYNAIGGKYNRGLTVVVAFRELVEPRKQDADSLQRAWTVGWCVELLQAFFLVADDIMDSSLTRRGQICWYQKPGVGLDAINDANLLEACIYRLLKLYCREQPYYLNLIELFLQSSYQTEIGQTLDLLTAPQGNVDLVRFTEKRYKSIVKYKTAFYSFYLPIAAAMYMAGIDGEKEHANAKKILLEMGEFFQIQDDYLDLFGDPSVTGKIGTDIQDNKCSWLVVQCLQRATPEQYQILKENYGQKEAEKVARVKALYEELDLPAVFLQYEEDSYSHIMALIEQYAAPLPPAVFLGLARKIYKRRK</sequence>
<reference key="1">
    <citation type="journal article" date="1990" name="J. Biol. Chem.">
        <title>Isolation and sequence of the human farnesyl pyrophosphate synthetase cDNA. Coordinate regulation of the mRNAs for farnesyl pyrophosphate synthetase, 3-hydroxy-3-methylglutaryl coenzyme A reductase, and 3-hydroxy-3-methylglutaryl coenzyme A synthase by phorbol ester.</title>
        <authorList>
            <person name="Wilkin D.J."/>
            <person name="Kutsunai S.Y."/>
            <person name="Edwards P.A."/>
        </authorList>
    </citation>
    <scope>NUCLEOTIDE SEQUENCE [MRNA] (ISOFORM 2)</scope>
</reference>
<reference key="2">
    <citation type="journal article" date="1994" name="DNA Res.">
        <title>Prediction of the coding sequences of unidentified human genes. I. The coding sequences of 40 new genes (KIAA0001-KIAA0040) deduced by analysis of randomly sampled cDNA clones from human immature myeloid cell line KG-1.</title>
        <authorList>
            <person name="Nomura N."/>
            <person name="Miyajima N."/>
            <person name="Sazuka T."/>
            <person name="Tanaka A."/>
            <person name="Kawarabayasi Y."/>
            <person name="Sato S."/>
            <person name="Nagase T."/>
            <person name="Seki N."/>
            <person name="Ishikawa K."/>
            <person name="Tabata S."/>
        </authorList>
    </citation>
    <scope>NUCLEOTIDE SEQUENCE [LARGE SCALE MRNA] (ISOFORM 1)</scope>
    <source>
        <tissue>Bone marrow</tissue>
    </source>
</reference>
<reference key="3">
    <citation type="journal article" date="2004" name="Nat. Genet.">
        <title>Complete sequencing and characterization of 21,243 full-length human cDNAs.</title>
        <authorList>
            <person name="Ota T."/>
            <person name="Suzuki Y."/>
            <person name="Nishikawa T."/>
            <person name="Otsuki T."/>
            <person name="Sugiyama T."/>
            <person name="Irie R."/>
            <person name="Wakamatsu A."/>
            <person name="Hayashi K."/>
            <person name="Sato H."/>
            <person name="Nagai K."/>
            <person name="Kimura K."/>
            <person name="Makita H."/>
            <person name="Sekine M."/>
            <person name="Obayashi M."/>
            <person name="Nishi T."/>
            <person name="Shibahara T."/>
            <person name="Tanaka T."/>
            <person name="Ishii S."/>
            <person name="Yamamoto J."/>
            <person name="Saito K."/>
            <person name="Kawai Y."/>
            <person name="Isono Y."/>
            <person name="Nakamura Y."/>
            <person name="Nagahari K."/>
            <person name="Murakami K."/>
            <person name="Yasuda T."/>
            <person name="Iwayanagi T."/>
            <person name="Wagatsuma M."/>
            <person name="Shiratori A."/>
            <person name="Sudo H."/>
            <person name="Hosoiri T."/>
            <person name="Kaku Y."/>
            <person name="Kodaira H."/>
            <person name="Kondo H."/>
            <person name="Sugawara M."/>
            <person name="Takahashi M."/>
            <person name="Kanda K."/>
            <person name="Yokoi T."/>
            <person name="Furuya T."/>
            <person name="Kikkawa E."/>
            <person name="Omura Y."/>
            <person name="Abe K."/>
            <person name="Kamihara K."/>
            <person name="Katsuta N."/>
            <person name="Sato K."/>
            <person name="Tanikawa M."/>
            <person name="Yamazaki M."/>
            <person name="Ninomiya K."/>
            <person name="Ishibashi T."/>
            <person name="Yamashita H."/>
            <person name="Murakawa K."/>
            <person name="Fujimori K."/>
            <person name="Tanai H."/>
            <person name="Kimata M."/>
            <person name="Watanabe M."/>
            <person name="Hiraoka S."/>
            <person name="Chiba Y."/>
            <person name="Ishida S."/>
            <person name="Ono Y."/>
            <person name="Takiguchi S."/>
            <person name="Watanabe S."/>
            <person name="Yosida M."/>
            <person name="Hotuta T."/>
            <person name="Kusano J."/>
            <person name="Kanehori K."/>
            <person name="Takahashi-Fujii A."/>
            <person name="Hara H."/>
            <person name="Tanase T.-O."/>
            <person name="Nomura Y."/>
            <person name="Togiya S."/>
            <person name="Komai F."/>
            <person name="Hara R."/>
            <person name="Takeuchi K."/>
            <person name="Arita M."/>
            <person name="Imose N."/>
            <person name="Musashino K."/>
            <person name="Yuuki H."/>
            <person name="Oshima A."/>
            <person name="Sasaki N."/>
            <person name="Aotsuka S."/>
            <person name="Yoshikawa Y."/>
            <person name="Matsunawa H."/>
            <person name="Ichihara T."/>
            <person name="Shiohata N."/>
            <person name="Sano S."/>
            <person name="Moriya S."/>
            <person name="Momiyama H."/>
            <person name="Satoh N."/>
            <person name="Takami S."/>
            <person name="Terashima Y."/>
            <person name="Suzuki O."/>
            <person name="Nakagawa S."/>
            <person name="Senoh A."/>
            <person name="Mizoguchi H."/>
            <person name="Goto Y."/>
            <person name="Shimizu F."/>
            <person name="Wakebe H."/>
            <person name="Hishigaki H."/>
            <person name="Watanabe T."/>
            <person name="Sugiyama A."/>
            <person name="Takemoto M."/>
            <person name="Kawakami B."/>
            <person name="Yamazaki M."/>
            <person name="Watanabe K."/>
            <person name="Kumagai A."/>
            <person name="Itakura S."/>
            <person name="Fukuzumi Y."/>
            <person name="Fujimori Y."/>
            <person name="Komiyama M."/>
            <person name="Tashiro H."/>
            <person name="Tanigami A."/>
            <person name="Fujiwara T."/>
            <person name="Ono T."/>
            <person name="Yamada K."/>
            <person name="Fujii Y."/>
            <person name="Ozaki K."/>
            <person name="Hirao M."/>
            <person name="Ohmori Y."/>
            <person name="Kawabata A."/>
            <person name="Hikiji T."/>
            <person name="Kobatake N."/>
            <person name="Inagaki H."/>
            <person name="Ikema Y."/>
            <person name="Okamoto S."/>
            <person name="Okitani R."/>
            <person name="Kawakami T."/>
            <person name="Noguchi S."/>
            <person name="Itoh T."/>
            <person name="Shigeta K."/>
            <person name="Senba T."/>
            <person name="Matsumura K."/>
            <person name="Nakajima Y."/>
            <person name="Mizuno T."/>
            <person name="Morinaga M."/>
            <person name="Sasaki M."/>
            <person name="Togashi T."/>
            <person name="Oyama M."/>
            <person name="Hata H."/>
            <person name="Watanabe M."/>
            <person name="Komatsu T."/>
            <person name="Mizushima-Sugano J."/>
            <person name="Satoh T."/>
            <person name="Shirai Y."/>
            <person name="Takahashi Y."/>
            <person name="Nakagawa K."/>
            <person name="Okumura K."/>
            <person name="Nagase T."/>
            <person name="Nomura N."/>
            <person name="Kikuchi H."/>
            <person name="Masuho Y."/>
            <person name="Yamashita R."/>
            <person name="Nakai K."/>
            <person name="Yada T."/>
            <person name="Nakamura Y."/>
            <person name="Ohara O."/>
            <person name="Isogai T."/>
            <person name="Sugano S."/>
        </authorList>
    </citation>
    <scope>NUCLEOTIDE SEQUENCE [LARGE SCALE MRNA] (ISOFORM 1)</scope>
</reference>
<reference key="4">
    <citation type="journal article" date="2006" name="Nature">
        <title>The DNA sequence and biological annotation of human chromosome 1.</title>
        <authorList>
            <person name="Gregory S.G."/>
            <person name="Barlow K.F."/>
            <person name="McLay K.E."/>
            <person name="Kaul R."/>
            <person name="Swarbreck D."/>
            <person name="Dunham A."/>
            <person name="Scott C.E."/>
            <person name="Howe K.L."/>
            <person name="Woodfine K."/>
            <person name="Spencer C.C.A."/>
            <person name="Jones M.C."/>
            <person name="Gillson C."/>
            <person name="Searle S."/>
            <person name="Zhou Y."/>
            <person name="Kokocinski F."/>
            <person name="McDonald L."/>
            <person name="Evans R."/>
            <person name="Phillips K."/>
            <person name="Atkinson A."/>
            <person name="Cooper R."/>
            <person name="Jones C."/>
            <person name="Hall R.E."/>
            <person name="Andrews T.D."/>
            <person name="Lloyd C."/>
            <person name="Ainscough R."/>
            <person name="Almeida J.P."/>
            <person name="Ambrose K.D."/>
            <person name="Anderson F."/>
            <person name="Andrew R.W."/>
            <person name="Ashwell R.I.S."/>
            <person name="Aubin K."/>
            <person name="Babbage A.K."/>
            <person name="Bagguley C.L."/>
            <person name="Bailey J."/>
            <person name="Beasley H."/>
            <person name="Bethel G."/>
            <person name="Bird C.P."/>
            <person name="Bray-Allen S."/>
            <person name="Brown J.Y."/>
            <person name="Brown A.J."/>
            <person name="Buckley D."/>
            <person name="Burton J."/>
            <person name="Bye J."/>
            <person name="Carder C."/>
            <person name="Chapman J.C."/>
            <person name="Clark S.Y."/>
            <person name="Clarke G."/>
            <person name="Clee C."/>
            <person name="Cobley V."/>
            <person name="Collier R.E."/>
            <person name="Corby N."/>
            <person name="Coville G.J."/>
            <person name="Davies J."/>
            <person name="Deadman R."/>
            <person name="Dunn M."/>
            <person name="Earthrowl M."/>
            <person name="Ellington A.G."/>
            <person name="Errington H."/>
            <person name="Frankish A."/>
            <person name="Frankland J."/>
            <person name="French L."/>
            <person name="Garner P."/>
            <person name="Garnett J."/>
            <person name="Gay L."/>
            <person name="Ghori M.R.J."/>
            <person name="Gibson R."/>
            <person name="Gilby L.M."/>
            <person name="Gillett W."/>
            <person name="Glithero R.J."/>
            <person name="Grafham D.V."/>
            <person name="Griffiths C."/>
            <person name="Griffiths-Jones S."/>
            <person name="Grocock R."/>
            <person name="Hammond S."/>
            <person name="Harrison E.S.I."/>
            <person name="Hart E."/>
            <person name="Haugen E."/>
            <person name="Heath P.D."/>
            <person name="Holmes S."/>
            <person name="Holt K."/>
            <person name="Howden P.J."/>
            <person name="Hunt A.R."/>
            <person name="Hunt S.E."/>
            <person name="Hunter G."/>
            <person name="Isherwood J."/>
            <person name="James R."/>
            <person name="Johnson C."/>
            <person name="Johnson D."/>
            <person name="Joy A."/>
            <person name="Kay M."/>
            <person name="Kershaw J.K."/>
            <person name="Kibukawa M."/>
            <person name="Kimberley A.M."/>
            <person name="King A."/>
            <person name="Knights A.J."/>
            <person name="Lad H."/>
            <person name="Laird G."/>
            <person name="Lawlor S."/>
            <person name="Leongamornlert D.A."/>
            <person name="Lloyd D.M."/>
            <person name="Loveland J."/>
            <person name="Lovell J."/>
            <person name="Lush M.J."/>
            <person name="Lyne R."/>
            <person name="Martin S."/>
            <person name="Mashreghi-Mohammadi M."/>
            <person name="Matthews L."/>
            <person name="Matthews N.S.W."/>
            <person name="McLaren S."/>
            <person name="Milne S."/>
            <person name="Mistry S."/>
            <person name="Moore M.J.F."/>
            <person name="Nickerson T."/>
            <person name="O'Dell C.N."/>
            <person name="Oliver K."/>
            <person name="Palmeiri A."/>
            <person name="Palmer S.A."/>
            <person name="Parker A."/>
            <person name="Patel D."/>
            <person name="Pearce A.V."/>
            <person name="Peck A.I."/>
            <person name="Pelan S."/>
            <person name="Phelps K."/>
            <person name="Phillimore B.J."/>
            <person name="Plumb R."/>
            <person name="Rajan J."/>
            <person name="Raymond C."/>
            <person name="Rouse G."/>
            <person name="Saenphimmachak C."/>
            <person name="Sehra H.K."/>
            <person name="Sheridan E."/>
            <person name="Shownkeen R."/>
            <person name="Sims S."/>
            <person name="Skuce C.D."/>
            <person name="Smith M."/>
            <person name="Steward C."/>
            <person name="Subramanian S."/>
            <person name="Sycamore N."/>
            <person name="Tracey A."/>
            <person name="Tromans A."/>
            <person name="Van Helmond Z."/>
            <person name="Wall M."/>
            <person name="Wallis J.M."/>
            <person name="White S."/>
            <person name="Whitehead S.L."/>
            <person name="Wilkinson J.E."/>
            <person name="Willey D.L."/>
            <person name="Williams H."/>
            <person name="Wilming L."/>
            <person name="Wray P.W."/>
            <person name="Wu Z."/>
            <person name="Coulson A."/>
            <person name="Vaudin M."/>
            <person name="Sulston J.E."/>
            <person name="Durbin R.M."/>
            <person name="Hubbard T."/>
            <person name="Wooster R."/>
            <person name="Dunham I."/>
            <person name="Carter N.P."/>
            <person name="McVean G."/>
            <person name="Ross M.T."/>
            <person name="Harrow J."/>
            <person name="Olson M.V."/>
            <person name="Beck S."/>
            <person name="Rogers J."/>
            <person name="Bentley D.R."/>
        </authorList>
    </citation>
    <scope>NUCLEOTIDE SEQUENCE [LARGE SCALE GENOMIC DNA]</scope>
</reference>
<reference key="5">
    <citation type="submission" date="2005-09" db="EMBL/GenBank/DDBJ databases">
        <authorList>
            <person name="Mural R.J."/>
            <person name="Istrail S."/>
            <person name="Sutton G.G."/>
            <person name="Florea L."/>
            <person name="Halpern A.L."/>
            <person name="Mobarry C.M."/>
            <person name="Lippert R."/>
            <person name="Walenz B."/>
            <person name="Shatkay H."/>
            <person name="Dew I."/>
            <person name="Miller J.R."/>
            <person name="Flanigan M.J."/>
            <person name="Edwards N.J."/>
            <person name="Bolanos R."/>
            <person name="Fasulo D."/>
            <person name="Halldorsson B.V."/>
            <person name="Hannenhalli S."/>
            <person name="Turner R."/>
            <person name="Yooseph S."/>
            <person name="Lu F."/>
            <person name="Nusskern D.R."/>
            <person name="Shue B.C."/>
            <person name="Zheng X.H."/>
            <person name="Zhong F."/>
            <person name="Delcher A.L."/>
            <person name="Huson D.H."/>
            <person name="Kravitz S.A."/>
            <person name="Mouchard L."/>
            <person name="Reinert K."/>
            <person name="Remington K.A."/>
            <person name="Clark A.G."/>
            <person name="Waterman M.S."/>
            <person name="Eichler E.E."/>
            <person name="Adams M.D."/>
            <person name="Hunkapiller M.W."/>
            <person name="Myers E.W."/>
            <person name="Venter J.C."/>
        </authorList>
    </citation>
    <scope>NUCLEOTIDE SEQUENCE [LARGE SCALE GENOMIC DNA]</scope>
</reference>
<reference key="6">
    <citation type="journal article" date="2004" name="Genome Res.">
        <title>The status, quality, and expansion of the NIH full-length cDNA project: the Mammalian Gene Collection (MGC).</title>
        <authorList>
            <consortium name="The MGC Project Team"/>
        </authorList>
    </citation>
    <scope>NUCLEOTIDE SEQUENCE [LARGE SCALE MRNA] (ISOFORM 1)</scope>
    <source>
        <tissue>Muscle</tissue>
    </source>
</reference>
<reference key="7">
    <citation type="submission" date="2002-04" db="EMBL/GenBank/DDBJ databases">
        <authorList>
            <consortium name="The MGC Project Team"/>
        </authorList>
    </citation>
    <scope>NUCLEOTIDE SEQUENCE [LARGE SCALE MRNA] OF 1-312 (ISOFORM 2)</scope>
</reference>
<reference key="8">
    <citation type="journal article" date="1989" name="Biochemistry">
        <title>Cloning, analysis, and bacterial expression of human farnesyl pyrophosphate synthetase and its regulation in Hep G2 cells.</title>
        <authorList>
            <person name="Sheares B.T."/>
            <person name="White S.S."/>
            <person name="Molowa D.T."/>
            <person name="Chan K."/>
            <person name="Ding V.D.-H."/>
            <person name="Kroon P.A."/>
            <person name="Bostedor R.G."/>
            <person name="Karkas J.D."/>
        </authorList>
    </citation>
    <scope>NUCLEOTIDE SEQUENCE [MRNA] OF 74-419</scope>
    <source>
        <tissue>Liver</tissue>
    </source>
</reference>
<reference key="9">
    <citation type="journal article" date="2002" name="J. Virol.">
        <title>Oncoviral bovine leukemia virus G4 and human T-cell leukemia virus type 1 p13(II) accessory proteins interact with farnesyl pyrophosphate synthetase.</title>
        <authorList>
            <person name="Lefebvre L."/>
            <person name="Vanderplasschen A."/>
            <person name="Ciminale V."/>
            <person name="Heremans H."/>
            <person name="Dangoisse O."/>
            <person name="Jauniaux J.-C."/>
            <person name="Toussaint J.-F."/>
            <person name="Zelnik V."/>
            <person name="Burny A."/>
            <person name="Kettmann R."/>
            <person name="Willems L."/>
        </authorList>
    </citation>
    <scope>INTERACTION WITH HTLV-1 P13(II) (MICROBIAL INFECTION)</scope>
</reference>
<reference key="10">
    <citation type="journal article" date="2007" name="Cell Host Microbe">
        <title>The interferon-inducible protein viperin inhibits influenza virus release by perturbing lipid rafts.</title>
        <authorList>
            <person name="Wang X."/>
            <person name="Hinson E.R."/>
            <person name="Cresswell P."/>
        </authorList>
    </citation>
    <scope>INTERACTION WITH RSAD2</scope>
    <scope>ACTIVITY REGULATION</scope>
</reference>
<reference key="11">
    <citation type="journal article" date="2005" name="Acta Biochim. Pol.">
        <title>Farnesyl diphosphate synthase; regulation of product specificity.</title>
        <authorList>
            <person name="Szkopinska A."/>
            <person name="Plochocka D."/>
        </authorList>
    </citation>
    <scope>REVIEW</scope>
</reference>
<reference key="12">
    <citation type="journal article" date="2009" name="Anal. Chem.">
        <title>Lys-N and trypsin cover complementary parts of the phosphoproteome in a refined SCX-based approach.</title>
        <authorList>
            <person name="Gauci S."/>
            <person name="Helbig A.O."/>
            <person name="Slijper M."/>
            <person name="Krijgsveld J."/>
            <person name="Heck A.J."/>
            <person name="Mohammed S."/>
        </authorList>
    </citation>
    <scope>ACETYLATION [LARGE SCALE ANALYSIS] AT MET-1 (ISOFORM 2)</scope>
    <scope>IDENTIFICATION BY MASS SPECTROMETRY [LARGE SCALE ANALYSIS]</scope>
</reference>
<reference key="13">
    <citation type="journal article" date="2009" name="Science">
        <title>Lysine acetylation targets protein complexes and co-regulates major cellular functions.</title>
        <authorList>
            <person name="Choudhary C."/>
            <person name="Kumar C."/>
            <person name="Gnad F."/>
            <person name="Nielsen M.L."/>
            <person name="Rehman M."/>
            <person name="Walther T.C."/>
            <person name="Olsen J.V."/>
            <person name="Mann M."/>
        </authorList>
    </citation>
    <scope>ACETYLATION [LARGE SCALE ANALYSIS] AT LYS-123 AND LYS-353</scope>
    <scope>IDENTIFICATION BY MASS SPECTROMETRY [LARGE SCALE ANALYSIS]</scope>
</reference>
<reference key="14">
    <citation type="journal article" date="2011" name="BMC Syst. Biol.">
        <title>Initial characterization of the human central proteome.</title>
        <authorList>
            <person name="Burkard T.R."/>
            <person name="Planyavsky M."/>
            <person name="Kaupe I."/>
            <person name="Breitwieser F.P."/>
            <person name="Buerckstuemmer T."/>
            <person name="Bennett K.L."/>
            <person name="Superti-Furga G."/>
            <person name="Colinge J."/>
        </authorList>
    </citation>
    <scope>IDENTIFICATION BY MASS SPECTROMETRY [LARGE SCALE ANALYSIS]</scope>
</reference>
<reference key="15">
    <citation type="journal article" date="2012" name="Mol. Cell. Proteomics">
        <title>Comparative large-scale characterisation of plant vs. mammal proteins reveals similar and idiosyncratic N-alpha acetylation features.</title>
        <authorList>
            <person name="Bienvenut W.V."/>
            <person name="Sumpton D."/>
            <person name="Martinez A."/>
            <person name="Lilla S."/>
            <person name="Espagne C."/>
            <person name="Meinnel T."/>
            <person name="Giglione C."/>
        </authorList>
    </citation>
    <scope>ACETYLATION [LARGE SCALE ANALYSIS] AT MET-1 (ISOFORM 2)</scope>
    <scope>IDENTIFICATION BY MASS SPECTROMETRY [LARGE SCALE ANALYSIS]</scope>
</reference>
<reference key="16">
    <citation type="journal article" date="2012" name="Proc. Natl. Acad. Sci. U.S.A.">
        <title>N-terminal acetylome analyses and functional insights of the N-terminal acetyltransferase NatB.</title>
        <authorList>
            <person name="Van Damme P."/>
            <person name="Lasa M."/>
            <person name="Polevoda B."/>
            <person name="Gazquez C."/>
            <person name="Elosegui-Artola A."/>
            <person name="Kim D.S."/>
            <person name="De Juan-Pardo E."/>
            <person name="Demeyer K."/>
            <person name="Hole K."/>
            <person name="Larrea E."/>
            <person name="Timmerman E."/>
            <person name="Prieto J."/>
            <person name="Arnesen T."/>
            <person name="Sherman F."/>
            <person name="Gevaert K."/>
            <person name="Aldabe R."/>
        </authorList>
    </citation>
    <scope>ACETYLATION [LARGE SCALE ANALYSIS] AT MET-1 (ISOFORM 2)</scope>
    <scope>IDENTIFICATION BY MASS SPECTROMETRY [LARGE SCALE ANALYSIS]</scope>
</reference>
<reference key="17">
    <citation type="journal article" date="2014" name="J. Proteomics">
        <title>An enzyme assisted RP-RPLC approach for in-depth analysis of human liver phosphoproteome.</title>
        <authorList>
            <person name="Bian Y."/>
            <person name="Song C."/>
            <person name="Cheng K."/>
            <person name="Dong M."/>
            <person name="Wang F."/>
            <person name="Huang J."/>
            <person name="Sun D."/>
            <person name="Wang L."/>
            <person name="Ye M."/>
            <person name="Zou H."/>
        </authorList>
    </citation>
    <scope>IDENTIFICATION BY MASS SPECTROMETRY [LARGE SCALE ANALYSIS]</scope>
    <source>
        <tissue>Liver</tissue>
    </source>
</reference>
<reference key="18">
    <citation type="journal article" date="2015" name="Elife">
        <title>Genomic variations of the mevalonate pathway in porokeratosis.</title>
        <authorList>
            <person name="Zhang Z."/>
            <person name="Li C."/>
            <person name="Wu F."/>
            <person name="Ma R."/>
            <person name="Luan J."/>
            <person name="Yang F."/>
            <person name="Liu W."/>
            <person name="Wang L."/>
            <person name="Zhang S."/>
            <person name="Liu Y."/>
            <person name="Gu J."/>
            <person name="Hua W."/>
            <person name="Fan M."/>
            <person name="Peng H."/>
            <person name="Meng X."/>
            <person name="Song N."/>
            <person name="Bi X."/>
            <person name="Gu C."/>
            <person name="Zhang Z."/>
            <person name="Huang Q."/>
            <person name="Chen L."/>
            <person name="Xiang L."/>
            <person name="Xu J."/>
            <person name="Zheng Z."/>
            <person name="Jiang Z."/>
        </authorList>
    </citation>
    <scope>INVOLVEMENT IN POROK9</scope>
    <scope>VARIANT POROK9 GLN-179</scope>
</reference>
<reference key="19">
    <citation type="journal article" date="2015" name="Proteomics">
        <title>N-terminome analysis of the human mitochondrial proteome.</title>
        <authorList>
            <person name="Vaca Jacome A.S."/>
            <person name="Rabilloud T."/>
            <person name="Schaeffer-Reiss C."/>
            <person name="Rompais M."/>
            <person name="Ayoub D."/>
            <person name="Lane L."/>
            <person name="Bairoch A."/>
            <person name="Van Dorsselaer A."/>
            <person name="Carapito C."/>
        </authorList>
    </citation>
    <scope>IDENTIFICATION BY MASS SPECTROMETRY [LARGE SCALE ANALYSIS]</scope>
</reference>
<reference key="20">
    <citation type="journal article" date="2018" name="Cell Res.">
        <title>Landscape of the regulatory elements for lysine 2-hydroxyisobutyrylation pathway.</title>
        <authorList>
            <person name="Huang H."/>
            <person name="Luo Z."/>
            <person name="Qi S."/>
            <person name="Huang J."/>
            <person name="Xu P."/>
            <person name="Wang X."/>
            <person name="Gao L."/>
            <person name="Li F."/>
            <person name="Wang J."/>
            <person name="Zhao W."/>
            <person name="Gu W."/>
            <person name="Chen Z."/>
            <person name="Dai L."/>
            <person name="Dai J."/>
            <person name="Zhao Y."/>
        </authorList>
    </citation>
    <scope>HYDROXYBUTYRYLATION AT LYS-123</scope>
</reference>
<reference key="21">
    <citation type="journal article" date="2006" name="ChemMedChem">
        <title>Structural basis for the exceptional in vivo efficacy of bisphosphonate drugs.</title>
        <authorList>
            <person name="Rondeau J.-M."/>
            <person name="Bitsch F."/>
            <person name="Bourgier E."/>
            <person name="Geiser M."/>
            <person name="Hemmig R."/>
            <person name="Kroemer M."/>
            <person name="Lehmann S."/>
            <person name="Ramage P."/>
            <person name="Rieffel S."/>
            <person name="Strauss A."/>
            <person name="Green J.R."/>
            <person name="Jahnke W."/>
        </authorList>
    </citation>
    <scope>X-RAY CRYSTALLOGRAPHY (1.94 ANGSTROMS) OF 72-419</scope>
    <scope>SUBUNIT</scope>
</reference>
<reference key="22">
    <citation type="journal article" date="2006" name="Proc. Natl. Acad. Sci. U.S.A.">
        <title>The molecular mechanism of nitrogen-containing bisphosphonates as antiosteoporosis drugs.</title>
        <authorList>
            <person name="Kavanagh K.L."/>
            <person name="Guo K."/>
            <person name="Dunford J.E."/>
            <person name="Wu X."/>
            <person name="Knapp S."/>
            <person name="Ebetino F.H."/>
            <person name="Rogers M.J."/>
            <person name="Russell R.G."/>
            <person name="Oppermann U."/>
        </authorList>
    </citation>
    <scope>X-RAY CRYSTALLOGRAPHY (2.00 ANGSTROMS) OF 67-419 IN COMPLEXES WITH MAGNESIUM IONS; ISOPENTENYL DIPHOSPHATE; RISEDRONATE AND ZOLEDRONATE</scope>
    <scope>CATALYTIC ACTIVITY</scope>
</reference>
<reference key="23">
    <citation type="journal article" date="2009" name="J. Am. Chem. Soc.">
        <title>Lipophilic bisphosphonates as dual farnesyl/geranylgeranyl diphosphate synthase inhibitors: an X-ray and NMR investigation.</title>
        <authorList>
            <person name="Zhang Y."/>
            <person name="Cao R."/>
            <person name="Yin F."/>
            <person name="Hudock M.P."/>
            <person name="Guo R.-T."/>
            <person name="Krysiak K."/>
            <person name="Mukherjee S."/>
            <person name="Gao Y.-G."/>
            <person name="Robinson H."/>
            <person name="Song Y."/>
            <person name="No J.H."/>
            <person name="Bergan K."/>
            <person name="Leon A."/>
            <person name="Cass L."/>
            <person name="Goddard A."/>
            <person name="Chang T.-K."/>
            <person name="Lin F.-Y."/>
            <person name="Van Beek E."/>
            <person name="Papapoulos S."/>
            <person name="Wang A.H.-J."/>
            <person name="Kubo T."/>
            <person name="Ochi M."/>
            <person name="Mukkamala D."/>
            <person name="Oldfield E."/>
        </authorList>
    </citation>
    <scope>X-RAY CRYSTALLOGRAPHY (2.4 ANGSTROMS) OF 67-419 IN COMPLEXES WITH MAGNESIUM AND BIPHOSPHONATES</scope>
</reference>
<comment type="function">
    <text>Key enzyme in isoprenoid biosynthesis which catalyzes the formation of farnesyl diphosphate (FPP), a precursor for several classes of essential metabolites including sterols, dolichols, carotenoids, and ubiquinones. FPP also serves as substrate for protein farnesylation and geranylgeranylation. Catalyzes the sequential condensation of isopentenyl pyrophosphate with the allylic pyrophosphates, dimethylallyl pyrophosphate, and then with the resultant geranylpyrophosphate to the ultimate product farnesyl pyrophosphate.</text>
</comment>
<comment type="catalytic activity">
    <reaction evidence="3">
        <text>isopentenyl diphosphate + dimethylallyl diphosphate = (2E)-geranyl diphosphate + diphosphate</text>
        <dbReference type="Rhea" id="RHEA:22408"/>
        <dbReference type="ChEBI" id="CHEBI:33019"/>
        <dbReference type="ChEBI" id="CHEBI:57623"/>
        <dbReference type="ChEBI" id="CHEBI:58057"/>
        <dbReference type="ChEBI" id="CHEBI:128769"/>
        <dbReference type="EC" id="2.5.1.1"/>
    </reaction>
</comment>
<comment type="catalytic activity">
    <reaction evidence="3">
        <text>isopentenyl diphosphate + (2E)-geranyl diphosphate = (2E,6E)-farnesyl diphosphate + diphosphate</text>
        <dbReference type="Rhea" id="RHEA:19361"/>
        <dbReference type="ChEBI" id="CHEBI:33019"/>
        <dbReference type="ChEBI" id="CHEBI:58057"/>
        <dbReference type="ChEBI" id="CHEBI:128769"/>
        <dbReference type="ChEBI" id="CHEBI:175763"/>
        <dbReference type="EC" id="2.5.1.10"/>
    </reaction>
</comment>
<comment type="cofactor">
    <cofactor evidence="6">
        <name>Mg(2+)</name>
        <dbReference type="ChEBI" id="CHEBI:18420"/>
    </cofactor>
    <text evidence="6">Binds 2 Mg(2+) ions per subunit.</text>
</comment>
<comment type="activity regulation">
    <text evidence="5">Inactivated by interferon-induced RSAD2. This inactivation may result of disruption of lipid rafts at the plasma membrane, and thus have an antiviral effect since many enveloped viruses need lipid rafts to bud efficiently out of the cell.</text>
</comment>
<comment type="pathway">
    <text>Isoprenoid biosynthesis; farnesyl diphosphate biosynthesis; farnesyl diphosphate from geranyl diphosphate and isopentenyl diphosphate: step 1/1.</text>
</comment>
<comment type="pathway">
    <text>Isoprenoid biosynthesis; geranyl diphosphate biosynthesis; geranyl diphosphate from dimethylallyl diphosphate and isopentenyl diphosphate: step 1/1.</text>
</comment>
<comment type="subunit">
    <text evidence="2 4 5">Homodimer. Interacts with RSAD2.</text>
</comment>
<comment type="subunit">
    <text evidence="2">(Microbial infection) Interacts with HTLV-1 protein p13(II).</text>
</comment>
<comment type="interaction">
    <interactant intactId="EBI-948245">
        <id>P14324</id>
    </interactant>
    <interactant intactId="EBI-348517">
        <id>O95870</id>
        <label>ABHD16A</label>
    </interactant>
    <organismsDiffer>false</organismsDiffer>
    <experiments>3</experiments>
</comment>
<comment type="interaction">
    <interactant intactId="EBI-948245">
        <id>P14324</id>
    </interactant>
    <interactant intactId="EBI-930964">
        <id>P54253</id>
        <label>ATXN1</label>
    </interactant>
    <organismsDiffer>false</organismsDiffer>
    <experiments>4</experiments>
</comment>
<comment type="interaction">
    <interactant intactId="EBI-948245">
        <id>P14324</id>
    </interactant>
    <interactant intactId="EBI-2466594">
        <id>Q6ZMZ0</id>
        <label>RNF19B</label>
    </interactant>
    <organismsDiffer>false</organismsDiffer>
    <experiments>3</experiments>
</comment>
<comment type="interaction">
    <interactant intactId="EBI-948245">
        <id>P14324</id>
    </interactant>
    <interactant intactId="EBI-8644112">
        <id>Q9BRI3</id>
        <label>SLC30A2</label>
    </interactant>
    <organismsDiffer>false</organismsDiffer>
    <experiments>3</experiments>
</comment>
<comment type="interaction">
    <interactant intactId="EBI-948245">
        <id>P14324</id>
    </interactant>
    <interactant intactId="EBI-17280858">
        <id>Q8WWF3</id>
        <label>SSMEM1</label>
    </interactant>
    <organismsDiffer>false</organismsDiffer>
    <experiments>3</experiments>
</comment>
<comment type="subcellular location">
    <subcellularLocation>
        <location>Cytoplasm</location>
    </subcellularLocation>
</comment>
<comment type="alternative products">
    <event type="alternative splicing"/>
    <isoform>
        <id>P14324-1</id>
        <name>1</name>
        <sequence type="displayed"/>
    </isoform>
    <isoform>
        <id>P14324-2</id>
        <name>2</name>
        <sequence type="described" ref="VSP_046958"/>
    </isoform>
</comment>
<comment type="disease" evidence="7">
    <disease id="DI-04569">
        <name>Porokeratosis 9, multiple types</name>
        <acronym>POROK9</acronym>
        <description>A form of porokeratosis, a disorder of faulty keratinization characterized by one or more atrophic patches surrounded by a distinctive hyperkeratotic ridgelike border called the cornoid lamella. The keratotic lesions can progress to overt cutaneous neoplasms, typically squamous cell carcinomas. Multiple clinical variants of porokeratosis are recognized, including porokeratosis of Mibelli, linear porokeratosis, disseminated superficial actinic porokeratosis, palmoplantar porokeratosis, and punctate porokeratosis. Different clinical presentations can be observed among members of the same family. Individuals expressing more than one variant have also been reported.</description>
        <dbReference type="MIM" id="616631"/>
    </disease>
    <text>The disease is caused by variants affecting the gene represented in this entry.</text>
</comment>
<comment type="similarity">
    <text evidence="11">Belongs to the FPP/GGPP synthase family.</text>
</comment>
<comment type="sequence caution" evidence="11">
    <conflict type="erroneous initiation">
        <sequence resource="EMBL-CDS" id="BAA03523"/>
    </conflict>
    <text>Extended N-terminus.</text>
</comment>